<organism>
    <name type="scientific">Caulobacter vibrioides (strain ATCC 19089 / CIP 103742 / CB 15)</name>
    <name type="common">Caulobacter crescentus</name>
    <dbReference type="NCBI Taxonomy" id="190650"/>
    <lineage>
        <taxon>Bacteria</taxon>
        <taxon>Pseudomonadati</taxon>
        <taxon>Pseudomonadota</taxon>
        <taxon>Alphaproteobacteria</taxon>
        <taxon>Caulobacterales</taxon>
        <taxon>Caulobacteraceae</taxon>
        <taxon>Caulobacter</taxon>
    </lineage>
</organism>
<keyword id="KW-0143">Chaperone</keyword>
<keyword id="KW-0963">Cytoplasm</keyword>
<keyword id="KW-1185">Reference proteome</keyword>
<proteinExistence type="inferred from homology"/>
<name>CH10_CAUVC</name>
<comment type="function">
    <text evidence="1">Together with the chaperonin GroEL, plays an essential role in assisting protein folding. The GroEL-GroES system forms a nano-cage that allows encapsulation of the non-native substrate proteins and provides a physical environment optimized to promote and accelerate protein folding. GroES binds to the apical surface of the GroEL ring, thereby capping the opening of the GroEL channel.</text>
</comment>
<comment type="subunit">
    <text evidence="1">Heptamer of 7 subunits arranged in a ring. Interacts with the chaperonin GroEL.</text>
</comment>
<comment type="subcellular location">
    <subcellularLocation>
        <location evidence="1">Cytoplasm</location>
    </subcellularLocation>
</comment>
<comment type="similarity">
    <text evidence="1 2">Belongs to the GroES chaperonin family.</text>
</comment>
<evidence type="ECO:0000255" key="1">
    <source>
        <dbReference type="HAMAP-Rule" id="MF_00580"/>
    </source>
</evidence>
<evidence type="ECO:0000305" key="2"/>
<protein>
    <recommendedName>
        <fullName evidence="1">Co-chaperonin GroES</fullName>
    </recommendedName>
    <alternativeName>
        <fullName evidence="1">10 kDa chaperonin</fullName>
    </alternativeName>
    <alternativeName>
        <fullName evidence="1">Chaperonin-10</fullName>
        <shortName evidence="1">Cpn10</shortName>
    </alternativeName>
</protein>
<feature type="chain" id="PRO_0000174726" description="Co-chaperonin GroES">
    <location>
        <begin position="1"/>
        <end position="96"/>
    </location>
</feature>
<dbReference type="EMBL" id="AE005673">
    <property type="protein sequence ID" value="AAK22671.1"/>
    <property type="molecule type" value="Genomic_DNA"/>
</dbReference>
<dbReference type="PIR" id="C87334">
    <property type="entry name" value="C87334"/>
</dbReference>
<dbReference type="RefSeq" id="NP_419503.1">
    <property type="nucleotide sequence ID" value="NC_002696.2"/>
</dbReference>
<dbReference type="RefSeq" id="WP_010918572.1">
    <property type="nucleotide sequence ID" value="NC_002696.2"/>
</dbReference>
<dbReference type="SMR" id="P0CAU0"/>
<dbReference type="STRING" id="190650.CC_0686"/>
<dbReference type="EnsemblBacteria" id="AAK22671">
    <property type="protein sequence ID" value="AAK22671"/>
    <property type="gene ID" value="CC_0686"/>
</dbReference>
<dbReference type="KEGG" id="ccr:CC_0686"/>
<dbReference type="PATRIC" id="fig|190650.5.peg.695"/>
<dbReference type="eggNOG" id="COG0234">
    <property type="taxonomic scope" value="Bacteria"/>
</dbReference>
<dbReference type="HOGENOM" id="CLU_132825_1_0_5"/>
<dbReference type="BioCyc" id="CAULO:CC0686-MONOMER"/>
<dbReference type="Proteomes" id="UP000001816">
    <property type="component" value="Chromosome"/>
</dbReference>
<dbReference type="GO" id="GO:0005737">
    <property type="term" value="C:cytoplasm"/>
    <property type="evidence" value="ECO:0007669"/>
    <property type="project" value="UniProtKB-SubCell"/>
</dbReference>
<dbReference type="GO" id="GO:0005524">
    <property type="term" value="F:ATP binding"/>
    <property type="evidence" value="ECO:0007669"/>
    <property type="project" value="InterPro"/>
</dbReference>
<dbReference type="GO" id="GO:0046872">
    <property type="term" value="F:metal ion binding"/>
    <property type="evidence" value="ECO:0007669"/>
    <property type="project" value="TreeGrafter"/>
</dbReference>
<dbReference type="GO" id="GO:0044183">
    <property type="term" value="F:protein folding chaperone"/>
    <property type="evidence" value="ECO:0007669"/>
    <property type="project" value="InterPro"/>
</dbReference>
<dbReference type="GO" id="GO:0051087">
    <property type="term" value="F:protein-folding chaperone binding"/>
    <property type="evidence" value="ECO:0007669"/>
    <property type="project" value="TreeGrafter"/>
</dbReference>
<dbReference type="GO" id="GO:0051082">
    <property type="term" value="F:unfolded protein binding"/>
    <property type="evidence" value="ECO:0007669"/>
    <property type="project" value="TreeGrafter"/>
</dbReference>
<dbReference type="GO" id="GO:0051085">
    <property type="term" value="P:chaperone cofactor-dependent protein refolding"/>
    <property type="evidence" value="ECO:0007669"/>
    <property type="project" value="TreeGrafter"/>
</dbReference>
<dbReference type="CDD" id="cd00320">
    <property type="entry name" value="cpn10"/>
    <property type="match status" value="1"/>
</dbReference>
<dbReference type="FunFam" id="2.30.33.40:FF:000001">
    <property type="entry name" value="10 kDa chaperonin"/>
    <property type="match status" value="1"/>
</dbReference>
<dbReference type="Gene3D" id="2.30.33.40">
    <property type="entry name" value="GroES chaperonin"/>
    <property type="match status" value="1"/>
</dbReference>
<dbReference type="HAMAP" id="MF_00580">
    <property type="entry name" value="CH10"/>
    <property type="match status" value="1"/>
</dbReference>
<dbReference type="InterPro" id="IPR020818">
    <property type="entry name" value="Chaperonin_GroES"/>
</dbReference>
<dbReference type="InterPro" id="IPR037124">
    <property type="entry name" value="Chaperonin_GroES_sf"/>
</dbReference>
<dbReference type="InterPro" id="IPR018369">
    <property type="entry name" value="Chaprnonin_Cpn10_CS"/>
</dbReference>
<dbReference type="InterPro" id="IPR011032">
    <property type="entry name" value="GroES-like_sf"/>
</dbReference>
<dbReference type="NCBIfam" id="NF001527">
    <property type="entry name" value="PRK00364.1-2"/>
    <property type="match status" value="1"/>
</dbReference>
<dbReference type="NCBIfam" id="NF001529">
    <property type="entry name" value="PRK00364.1-5"/>
    <property type="match status" value="1"/>
</dbReference>
<dbReference type="NCBIfam" id="NF001531">
    <property type="entry name" value="PRK00364.2-2"/>
    <property type="match status" value="1"/>
</dbReference>
<dbReference type="NCBIfam" id="NF001533">
    <property type="entry name" value="PRK00364.2-4"/>
    <property type="match status" value="1"/>
</dbReference>
<dbReference type="NCBIfam" id="NF001534">
    <property type="entry name" value="PRK00364.2-5"/>
    <property type="match status" value="1"/>
</dbReference>
<dbReference type="NCBIfam" id="NF001537">
    <property type="entry name" value="PRK00364.3-3"/>
    <property type="match status" value="1"/>
</dbReference>
<dbReference type="PANTHER" id="PTHR10772">
    <property type="entry name" value="10 KDA HEAT SHOCK PROTEIN"/>
    <property type="match status" value="1"/>
</dbReference>
<dbReference type="PANTHER" id="PTHR10772:SF58">
    <property type="entry name" value="CO-CHAPERONIN GROES"/>
    <property type="match status" value="1"/>
</dbReference>
<dbReference type="Pfam" id="PF00166">
    <property type="entry name" value="Cpn10"/>
    <property type="match status" value="1"/>
</dbReference>
<dbReference type="PRINTS" id="PR00297">
    <property type="entry name" value="CHAPERONIN10"/>
</dbReference>
<dbReference type="SMART" id="SM00883">
    <property type="entry name" value="Cpn10"/>
    <property type="match status" value="1"/>
</dbReference>
<dbReference type="SUPFAM" id="SSF50129">
    <property type="entry name" value="GroES-like"/>
    <property type="match status" value="1"/>
</dbReference>
<dbReference type="PROSITE" id="PS00681">
    <property type="entry name" value="CHAPERONINS_CPN10"/>
    <property type="match status" value="1"/>
</dbReference>
<gene>
    <name evidence="1" type="primary">groES</name>
    <name evidence="1" type="synonym">groS</name>
    <name type="synonym">mopB</name>
    <name type="ordered locus">CC_0686</name>
</gene>
<accession>P0CAU0</accession>
<accession>P48222</accession>
<reference key="1">
    <citation type="journal article" date="2001" name="Proc. Natl. Acad. Sci. U.S.A.">
        <title>Complete genome sequence of Caulobacter crescentus.</title>
        <authorList>
            <person name="Nierman W.C."/>
            <person name="Feldblyum T.V."/>
            <person name="Laub M.T."/>
            <person name="Paulsen I.T."/>
            <person name="Nelson K.E."/>
            <person name="Eisen J.A."/>
            <person name="Heidelberg J.F."/>
            <person name="Alley M.R.K."/>
            <person name="Ohta N."/>
            <person name="Maddock J.R."/>
            <person name="Potocka I."/>
            <person name="Nelson W.C."/>
            <person name="Newton A."/>
            <person name="Stephens C."/>
            <person name="Phadke N.D."/>
            <person name="Ely B."/>
            <person name="DeBoy R.T."/>
            <person name="Dodson R.J."/>
            <person name="Durkin A.S."/>
            <person name="Gwinn M.L."/>
            <person name="Haft D.H."/>
            <person name="Kolonay J.F."/>
            <person name="Smit J."/>
            <person name="Craven M.B."/>
            <person name="Khouri H.M."/>
            <person name="Shetty J."/>
            <person name="Berry K.J."/>
            <person name="Utterback T.R."/>
            <person name="Tran K."/>
            <person name="Wolf A.M."/>
            <person name="Vamathevan J.J."/>
            <person name="Ermolaeva M.D."/>
            <person name="White O."/>
            <person name="Salzberg S.L."/>
            <person name="Venter J.C."/>
            <person name="Shapiro L."/>
            <person name="Fraser C.M."/>
        </authorList>
    </citation>
    <scope>NUCLEOTIDE SEQUENCE [LARGE SCALE GENOMIC DNA]</scope>
    <source>
        <strain>ATCC 19089 / CIP 103742 / CB 15</strain>
    </source>
</reference>
<sequence>MKFRPLGDRVLVKRVEEETKTKGGIIIPDTAKEKPQEGEVVAVGPGARNDKGDVVALDVKAGDRILFGKWSGTEVKVDGQDLLIMKESDVLGVVEA</sequence>